<evidence type="ECO:0000250" key="1">
    <source>
        <dbReference type="UniProtKB" id="P26179"/>
    </source>
</evidence>
<evidence type="ECO:0000305" key="2"/>
<name>BCHZ_CERS4</name>
<sequence length="491" mass="53429">MLVQDHDRAGGYWGAVYAFCAVKGLQVVIDGPVGCENLPVTSVLHYTDALPPHELPIVVTGLGESEMSEGTEASMSRAWKVLDPALPAVVVTGSIAEMIGGGVTPQGTNIQRFLPRTIDEDQWEAADRAMTWIFSEFGMTKGRMPPEAKRPEGAKPRVNILGPMYGVFNMASDLHEIRRLVEGIGAEVNMVMPLGAHLAEMRHLVNADANIVMYREFGRGLAEVLGKPYLQAPIGVESTTAFLRRLGEILGLDPEPFIEREKHSTLKPVWDLWRSVTQDFFGTANFGIVATETYARGIRNYLEGDLGLPCAFAVARKRGSKTDNEAVRGLIRQHRPLVLMGSINEKIYLAELKAGHGPQPSFIAASFPGAAIRRATGTPVMGYAGATWLLQEVCNALFDALFHILPLGTEMDSAAATPTTLRRDFPWDADAQAALDRIVEEHPVLTRISAARALRDAAEKAALDAGAERVVRETVEALRGPGFGERKGENQ</sequence>
<organism>
    <name type="scientific">Cereibacter sphaeroides (strain ATCC 17023 / DSM 158 / JCM 6121 / CCUG 31486 / LMG 2827 / NBRC 12203 / NCIMB 8253 / ATH 2.4.1.)</name>
    <name type="common">Rhodobacter sphaeroides</name>
    <dbReference type="NCBI Taxonomy" id="272943"/>
    <lineage>
        <taxon>Bacteria</taxon>
        <taxon>Pseudomonadati</taxon>
        <taxon>Pseudomonadota</taxon>
        <taxon>Alphaproteobacteria</taxon>
        <taxon>Rhodobacterales</taxon>
        <taxon>Paracoccaceae</taxon>
        <taxon>Cereibacter</taxon>
    </lineage>
</organism>
<protein>
    <recommendedName>
        <fullName>Chlorophyllide reductase subunit Z</fullName>
        <ecNumber evidence="1">1.3.7.15</ecNumber>
    </recommendedName>
    <alternativeName>
        <fullName>Chlorin reductase subunit Z</fullName>
    </alternativeName>
</protein>
<gene>
    <name type="primary">bchZ</name>
    <name type="ordered locus">RHOS4_18660</name>
    <name type="ORF">RSP_0260</name>
</gene>
<keyword id="KW-0077">Bacteriochlorophyll biosynthesis</keyword>
<keyword id="KW-0149">Chlorophyll biosynthesis</keyword>
<keyword id="KW-0560">Oxidoreductase</keyword>
<keyword id="KW-0602">Photosynthesis</keyword>
<keyword id="KW-1185">Reference proteome</keyword>
<dbReference type="EC" id="1.3.7.15" evidence="1"/>
<dbReference type="EMBL" id="AJ010302">
    <property type="protein sequence ID" value="CAB38749.1"/>
    <property type="molecule type" value="Genomic_DNA"/>
</dbReference>
<dbReference type="EMBL" id="AF195122">
    <property type="protein sequence ID" value="AAF24299.1"/>
    <property type="molecule type" value="Genomic_DNA"/>
</dbReference>
<dbReference type="EMBL" id="CP000143">
    <property type="protein sequence ID" value="ABA79434.1"/>
    <property type="molecule type" value="Genomic_DNA"/>
</dbReference>
<dbReference type="PIR" id="S30917">
    <property type="entry name" value="S30917"/>
</dbReference>
<dbReference type="PIR" id="T50755">
    <property type="entry name" value="T50755"/>
</dbReference>
<dbReference type="RefSeq" id="WP_011338109.1">
    <property type="nucleotide sequence ID" value="NC_007493.2"/>
</dbReference>
<dbReference type="RefSeq" id="YP_353335.1">
    <property type="nucleotide sequence ID" value="NC_007493.2"/>
</dbReference>
<dbReference type="SMR" id="Q3J1A0"/>
<dbReference type="STRING" id="272943.RSP_0260"/>
<dbReference type="EnsemblBacteria" id="ABA79434">
    <property type="protein sequence ID" value="ABA79434"/>
    <property type="gene ID" value="RSP_0260"/>
</dbReference>
<dbReference type="GeneID" id="3719270"/>
<dbReference type="KEGG" id="rsp:RSP_0260"/>
<dbReference type="PATRIC" id="fig|272943.9.peg.2204"/>
<dbReference type="eggNOG" id="COG2710">
    <property type="taxonomic scope" value="Bacteria"/>
</dbReference>
<dbReference type="OrthoDB" id="5713965at2"/>
<dbReference type="PhylomeDB" id="Q3J1A0"/>
<dbReference type="BioCyc" id="MetaCyc:MONOMER-13258"/>
<dbReference type="UniPathway" id="UPA00669"/>
<dbReference type="Proteomes" id="UP000002703">
    <property type="component" value="Chromosome 1"/>
</dbReference>
<dbReference type="GO" id="GO:0016730">
    <property type="term" value="F:oxidoreductase activity, acting on iron-sulfur proteins as donors"/>
    <property type="evidence" value="ECO:0007669"/>
    <property type="project" value="InterPro"/>
</dbReference>
<dbReference type="GO" id="GO:0030494">
    <property type="term" value="P:bacteriochlorophyll biosynthetic process"/>
    <property type="evidence" value="ECO:0007669"/>
    <property type="project" value="UniProtKB-UniPathway"/>
</dbReference>
<dbReference type="GO" id="GO:0015979">
    <property type="term" value="P:photosynthesis"/>
    <property type="evidence" value="ECO:0007669"/>
    <property type="project" value="UniProtKB-KW"/>
</dbReference>
<dbReference type="Gene3D" id="3.40.50.1980">
    <property type="entry name" value="Nitrogenase molybdenum iron protein domain"/>
    <property type="match status" value="2"/>
</dbReference>
<dbReference type="InterPro" id="IPR010244">
    <property type="entry name" value="BchZ"/>
</dbReference>
<dbReference type="InterPro" id="IPR050152">
    <property type="entry name" value="ChlB/BchB/BchZ"/>
</dbReference>
<dbReference type="InterPro" id="IPR013580">
    <property type="entry name" value="LI-POR_suB-like_C"/>
</dbReference>
<dbReference type="InterPro" id="IPR000510">
    <property type="entry name" value="Nase/OxRdtase_comp1"/>
</dbReference>
<dbReference type="InterPro" id="IPR016209">
    <property type="entry name" value="Protochlorophyllide_Rdtase"/>
</dbReference>
<dbReference type="NCBIfam" id="TIGR02014">
    <property type="entry name" value="BchZ"/>
    <property type="match status" value="1"/>
</dbReference>
<dbReference type="PANTHER" id="PTHR33712">
    <property type="entry name" value="LIGHT-INDEPENDENT PROTOCHLOROPHYLLIDE REDUCTASE SUBUNIT B"/>
    <property type="match status" value="1"/>
</dbReference>
<dbReference type="PANTHER" id="PTHR33712:SF7">
    <property type="entry name" value="LIGHT-INDEPENDENT PROTOCHLOROPHYLLIDE REDUCTASE SUBUNIT B"/>
    <property type="match status" value="1"/>
</dbReference>
<dbReference type="Pfam" id="PF00148">
    <property type="entry name" value="Oxidored_nitro"/>
    <property type="match status" value="1"/>
</dbReference>
<dbReference type="Pfam" id="PF08369">
    <property type="entry name" value="PCP_red"/>
    <property type="match status" value="1"/>
</dbReference>
<dbReference type="PIRSF" id="PIRSF000163">
    <property type="entry name" value="PCP_ChlB"/>
    <property type="match status" value="1"/>
</dbReference>
<dbReference type="SUPFAM" id="SSF53807">
    <property type="entry name" value="Helical backbone' metal receptor"/>
    <property type="match status" value="1"/>
</dbReference>
<feature type="chain" id="PRO_0000219852" description="Chlorophyllide reductase subunit Z">
    <location>
        <begin position="1"/>
        <end position="491"/>
    </location>
</feature>
<feature type="sequence conflict" description="In Ref. 1; CAB38749." evidence="2" ref="1">
    <original>GR</original>
    <variation>A</variation>
    <location>
        <begin position="218"/>
        <end position="219"/>
    </location>
</feature>
<feature type="sequence conflict" description="In Ref. 1; CAB38749." evidence="2" ref="1">
    <original>EK</original>
    <variation>AP</variation>
    <location>
        <begin position="261"/>
        <end position="262"/>
    </location>
</feature>
<feature type="sequence conflict" description="In Ref. 1; CAB38749." evidence="2" ref="1">
    <original>E</original>
    <variation>Q</variation>
    <location>
        <position position="410"/>
    </location>
</feature>
<comment type="function">
    <text evidence="1">Converts chlorophylls (Chl) into bacteriochlorophylls (BChl) by reducing ring B of the tetrapyrrole.</text>
</comment>
<comment type="catalytic activity">
    <reaction evidence="1">
        <text>3-deacetyl-3-vinylbacteriochlorophyllide a + 2 oxidized [2Fe-2S]-[ferredoxin] + ADP + phosphate = chlorophyllide a + 2 reduced [2Fe-2S]-[ferredoxin] + ATP + H2O + H(+)</text>
        <dbReference type="Rhea" id="RHEA:37051"/>
        <dbReference type="Rhea" id="RHEA-COMP:10000"/>
        <dbReference type="Rhea" id="RHEA-COMP:10001"/>
        <dbReference type="ChEBI" id="CHEBI:15377"/>
        <dbReference type="ChEBI" id="CHEBI:15378"/>
        <dbReference type="ChEBI" id="CHEBI:30616"/>
        <dbReference type="ChEBI" id="CHEBI:33737"/>
        <dbReference type="ChEBI" id="CHEBI:33738"/>
        <dbReference type="ChEBI" id="CHEBI:43474"/>
        <dbReference type="ChEBI" id="CHEBI:83348"/>
        <dbReference type="ChEBI" id="CHEBI:83373"/>
        <dbReference type="ChEBI" id="CHEBI:456216"/>
        <dbReference type="EC" id="1.3.7.15"/>
    </reaction>
</comment>
<comment type="catalytic activity">
    <reaction evidence="1">
        <text>bacteriochlorophyllide a + 2 oxidized [2Fe-2S]-[ferredoxin] + ADP + phosphate = 3-acetyl-3-devinylchlorophyllide a + 2 reduced [2Fe-2S]-[ferredoxin] + ATP + H2O + H(+)</text>
        <dbReference type="Rhea" id="RHEA:48944"/>
        <dbReference type="Rhea" id="RHEA-COMP:10000"/>
        <dbReference type="Rhea" id="RHEA-COMP:10001"/>
        <dbReference type="ChEBI" id="CHEBI:15377"/>
        <dbReference type="ChEBI" id="CHEBI:15378"/>
        <dbReference type="ChEBI" id="CHEBI:30616"/>
        <dbReference type="ChEBI" id="CHEBI:33737"/>
        <dbReference type="ChEBI" id="CHEBI:33738"/>
        <dbReference type="ChEBI" id="CHEBI:43474"/>
        <dbReference type="ChEBI" id="CHEBI:90794"/>
        <dbReference type="ChEBI" id="CHEBI:90795"/>
        <dbReference type="ChEBI" id="CHEBI:456216"/>
        <dbReference type="EC" id="1.3.7.15"/>
    </reaction>
</comment>
<comment type="catalytic activity">
    <reaction evidence="1">
        <text>3-deacetyl-3-(1-hydroxyethyl)bacteriochlorophyllide a + 2 oxidized [2Fe-2S]-[ferredoxin] + ADP + phosphate = 3-devinyl-3-(1-hydroxyethyl)chlorophyllide a + 2 reduced [2Fe-2S]-[ferredoxin] + ATP + H2O + H(+)</text>
        <dbReference type="Rhea" id="RHEA:48948"/>
        <dbReference type="Rhea" id="RHEA-COMP:10000"/>
        <dbReference type="Rhea" id="RHEA-COMP:10001"/>
        <dbReference type="ChEBI" id="CHEBI:15377"/>
        <dbReference type="ChEBI" id="CHEBI:15378"/>
        <dbReference type="ChEBI" id="CHEBI:30616"/>
        <dbReference type="ChEBI" id="CHEBI:33737"/>
        <dbReference type="ChEBI" id="CHEBI:33738"/>
        <dbReference type="ChEBI" id="CHEBI:43474"/>
        <dbReference type="ChEBI" id="CHEBI:90791"/>
        <dbReference type="ChEBI" id="CHEBI:90792"/>
        <dbReference type="ChEBI" id="CHEBI:456216"/>
        <dbReference type="EC" id="1.3.7.15"/>
    </reaction>
</comment>
<comment type="pathway">
    <text>Porphyrin-containing compound metabolism; bacteriochlorophyll biosynthesis.</text>
</comment>
<comment type="subunit">
    <text evidence="1">Chlorophyllide reductase is composed of three subunits; BchX, BchY and BchZ. Forms a heterodimer of one BchY and one BchZ subunit.</text>
</comment>
<comment type="similarity">
    <text evidence="2">Belongs to the ChlB/BchB/BchZ family.</text>
</comment>
<accession>Q3J1A0</accession>
<accession>Q02433</accession>
<accession>Q9RFC0</accession>
<reference key="1">
    <citation type="journal article" date="1993" name="Mol. Gen. Genet.">
        <title>Genetic analysis of the bchC and bchA genes of Rhodobacter sphaeroides.</title>
        <authorList>
            <person name="McGlynn P."/>
            <person name="Hunter C.N."/>
        </authorList>
    </citation>
    <scope>NUCLEOTIDE SEQUENCE [GENOMIC DNA]</scope>
</reference>
<reference key="2">
    <citation type="journal article" date="2000" name="Nucleic Acids Res.">
        <title>DNA sequence analysis of the photosynthesis region of Rhodobacter sphaeroides 2.4.1.</title>
        <authorList>
            <person name="Choudhary M."/>
            <person name="Kaplan S."/>
        </authorList>
    </citation>
    <scope>NUCLEOTIDE SEQUENCE [GENOMIC DNA]</scope>
</reference>
<reference key="3">
    <citation type="submission" date="2005-09" db="EMBL/GenBank/DDBJ databases">
        <title>Complete sequence of chromosome 1 of Rhodobacter sphaeroides 2.4.1.</title>
        <authorList>
            <person name="Copeland A."/>
            <person name="Lucas S."/>
            <person name="Lapidus A."/>
            <person name="Barry K."/>
            <person name="Detter J.C."/>
            <person name="Glavina T."/>
            <person name="Hammon N."/>
            <person name="Israni S."/>
            <person name="Pitluck S."/>
            <person name="Richardson P."/>
            <person name="Mackenzie C."/>
            <person name="Choudhary M."/>
            <person name="Larimer F."/>
            <person name="Hauser L.J."/>
            <person name="Land M."/>
            <person name="Donohue T.J."/>
            <person name="Kaplan S."/>
        </authorList>
    </citation>
    <scope>NUCLEOTIDE SEQUENCE [LARGE SCALE GENOMIC DNA]</scope>
    <source>
        <strain>ATCC 17023 / DSM 158 / JCM 6121 / CCUG 31486 / LMG 2827 / NBRC 12203 / NCIMB 8253 / ATH 2.4.1.</strain>
    </source>
</reference>
<proteinExistence type="inferred from homology"/>